<keyword id="KW-0489">Methyltransferase</keyword>
<keyword id="KW-0545">Nucleotide biosynthesis</keyword>
<keyword id="KW-0808">Transferase</keyword>
<accession>P07606</accession>
<sequence length="279" mass="32785">MTQFDKQYNSIIKDIINNGISDEEFDVRTKWDSDGTPAHTLSVMSKQMRFDNSEVPILTTKKVAWKTAIKELLWIWQLKSNDVTELNKMGVHIWDQWKQEDGTIGHAYGFQLGKKNRSLNGEKVDQVDYLLHQLKNNPSSRRHITMLWNPDDLDAMALTPCVYETQWYVKQGKLHLEVRARSNDMALGNPFNVFQYNVLQRMIAQVTGYELGEYIFNIGDCHVYTRHIDNLKIQMEREQFEAPELWINPEVKDFYNFTVDDFKLINYKHGDKLLFEVAV</sequence>
<gene>
    <name type="primary">thyP3</name>
</gene>
<protein>
    <recommendedName>
        <fullName>Thymidylate synthase</fullName>
        <shortName>TS</shortName>
        <shortName>TSase</shortName>
        <ecNumber>2.1.1.45</ecNumber>
    </recommendedName>
</protein>
<feature type="chain" id="PRO_0000141060" description="Thymidylate synthase">
    <location>
        <begin position="1"/>
        <end position="279"/>
    </location>
</feature>
<feature type="active site" description="Nucleophile" evidence="1">
    <location>
        <position position="161"/>
    </location>
</feature>
<feature type="binding site" evidence="1">
    <location>
        <begin position="141"/>
        <end position="142"/>
    </location>
    <ligand>
        <name>dUMP</name>
        <dbReference type="ChEBI" id="CHEBI:246422"/>
        <note>ligand shared between dimeric partners</note>
    </ligand>
</feature>
<feature type="binding site" description="in other chain" evidence="1">
    <location>
        <begin position="181"/>
        <end position="184"/>
    </location>
    <ligand>
        <name>dUMP</name>
        <dbReference type="ChEBI" id="CHEBI:246422"/>
        <note>ligand shared between dimeric partners</note>
    </ligand>
</feature>
<feature type="binding site" evidence="1">
    <location>
        <position position="184"/>
    </location>
    <ligand>
        <name>(6R)-5,10-methylene-5,6,7,8-tetrahydrofolate</name>
        <dbReference type="ChEBI" id="CHEBI:15636"/>
    </ligand>
</feature>
<feature type="binding site" description="in other chain" evidence="1">
    <location>
        <position position="192"/>
    </location>
    <ligand>
        <name>dUMP</name>
        <dbReference type="ChEBI" id="CHEBI:246422"/>
        <note>ligand shared between dimeric partners</note>
    </ligand>
</feature>
<feature type="binding site" description="in other chain" evidence="1">
    <location>
        <begin position="222"/>
        <end position="224"/>
    </location>
    <ligand>
        <name>dUMP</name>
        <dbReference type="ChEBI" id="CHEBI:246422"/>
        <note>ligand shared between dimeric partners</note>
    </ligand>
</feature>
<feature type="binding site" evidence="1">
    <location>
        <position position="278"/>
    </location>
    <ligand>
        <name>(6R)-5,10-methylene-5,6,7,8-tetrahydrofolate</name>
        <dbReference type="ChEBI" id="CHEBI:15636"/>
    </ligand>
</feature>
<comment type="function">
    <text>Provides the sole de novo source of dTMP for DNA biosynthesis.</text>
</comment>
<comment type="catalytic activity">
    <reaction>
        <text>dUMP + (6R)-5,10-methylene-5,6,7,8-tetrahydrofolate = 7,8-dihydrofolate + dTMP</text>
        <dbReference type="Rhea" id="RHEA:12104"/>
        <dbReference type="ChEBI" id="CHEBI:15636"/>
        <dbReference type="ChEBI" id="CHEBI:57451"/>
        <dbReference type="ChEBI" id="CHEBI:63528"/>
        <dbReference type="ChEBI" id="CHEBI:246422"/>
        <dbReference type="EC" id="2.1.1.45"/>
    </reaction>
</comment>
<comment type="pathway">
    <text>Pyrimidine metabolism; dTTP biosynthesis.</text>
</comment>
<comment type="subunit">
    <text>Homodimer.</text>
</comment>
<comment type="similarity">
    <text evidence="2">Belongs to the thymidylate synthase family.</text>
</comment>
<dbReference type="EC" id="2.1.1.45"/>
<dbReference type="EMBL" id="M10122">
    <property type="protein sequence ID" value="AAA32353.1"/>
    <property type="molecule type" value="Genomic_DNA"/>
</dbReference>
<dbReference type="PIR" id="A22800">
    <property type="entry name" value="SYBP3T"/>
</dbReference>
<dbReference type="SMR" id="P07606"/>
<dbReference type="UniPathway" id="UPA00575"/>
<dbReference type="GO" id="GO:0004799">
    <property type="term" value="F:thymidylate synthase activity"/>
    <property type="evidence" value="ECO:0007669"/>
    <property type="project" value="UniProtKB-EC"/>
</dbReference>
<dbReference type="GO" id="GO:0006231">
    <property type="term" value="P:dTMP biosynthetic process"/>
    <property type="evidence" value="ECO:0007669"/>
    <property type="project" value="InterPro"/>
</dbReference>
<dbReference type="GO" id="GO:0006235">
    <property type="term" value="P:dTTP biosynthetic process"/>
    <property type="evidence" value="ECO:0007669"/>
    <property type="project" value="UniProtKB-UniPathway"/>
</dbReference>
<dbReference type="GO" id="GO:0032259">
    <property type="term" value="P:methylation"/>
    <property type="evidence" value="ECO:0007669"/>
    <property type="project" value="UniProtKB-KW"/>
</dbReference>
<dbReference type="CDD" id="cd00351">
    <property type="entry name" value="TS_Pyrimidine_HMase"/>
    <property type="match status" value="1"/>
</dbReference>
<dbReference type="FunFam" id="3.30.572.10:FF:000010">
    <property type="entry name" value="Thymidylate synthase 1"/>
    <property type="match status" value="1"/>
</dbReference>
<dbReference type="Gene3D" id="3.30.572.10">
    <property type="entry name" value="Thymidylate synthase/dCMP hydroxymethylase domain"/>
    <property type="match status" value="1"/>
</dbReference>
<dbReference type="HAMAP" id="MF_00008">
    <property type="entry name" value="Thymidy_synth_bact"/>
    <property type="match status" value="1"/>
</dbReference>
<dbReference type="InterPro" id="IPR045097">
    <property type="entry name" value="Thymidate_synth/dCMP_Mease"/>
</dbReference>
<dbReference type="InterPro" id="IPR023451">
    <property type="entry name" value="Thymidate_synth/dCMP_Mease_dom"/>
</dbReference>
<dbReference type="InterPro" id="IPR036926">
    <property type="entry name" value="Thymidate_synth/dCMP_Mease_sf"/>
</dbReference>
<dbReference type="InterPro" id="IPR000398">
    <property type="entry name" value="Thymidylate_synthase"/>
</dbReference>
<dbReference type="InterPro" id="IPR020940">
    <property type="entry name" value="Thymidylate_synthase_AS"/>
</dbReference>
<dbReference type="NCBIfam" id="NF002495">
    <property type="entry name" value="PRK01827.1-1"/>
    <property type="match status" value="1"/>
</dbReference>
<dbReference type="NCBIfam" id="TIGR03284">
    <property type="entry name" value="thym_sym"/>
    <property type="match status" value="1"/>
</dbReference>
<dbReference type="PANTHER" id="PTHR11548">
    <property type="entry name" value="THYMIDYLATE SYNTHASE 1"/>
    <property type="match status" value="1"/>
</dbReference>
<dbReference type="PANTHER" id="PTHR11548:SF1">
    <property type="entry name" value="THYMIDYLATE SYNTHASE 1"/>
    <property type="match status" value="1"/>
</dbReference>
<dbReference type="Pfam" id="PF00303">
    <property type="entry name" value="Thymidylat_synt"/>
    <property type="match status" value="1"/>
</dbReference>
<dbReference type="PRINTS" id="PR00108">
    <property type="entry name" value="THYMDSNTHASE"/>
</dbReference>
<dbReference type="SUPFAM" id="SSF55831">
    <property type="entry name" value="Thymidylate synthase/dCMP hydroxymethylase"/>
    <property type="match status" value="1"/>
</dbReference>
<dbReference type="PROSITE" id="PS00091">
    <property type="entry name" value="THYMIDYLATE_SYNTHASE"/>
    <property type="match status" value="1"/>
</dbReference>
<proteinExistence type="inferred from homology"/>
<evidence type="ECO:0000250" key="1">
    <source>
        <dbReference type="UniProtKB" id="P0A884"/>
    </source>
</evidence>
<evidence type="ECO:0000305" key="2"/>
<name>TYSY_BPPHT</name>
<organismHost>
    <name type="scientific">Bacillus subtilis</name>
    <dbReference type="NCBI Taxonomy" id="1423"/>
</organismHost>
<reference key="1">
    <citation type="journal article" date="1985" name="Gene">
        <title>Nucleotide sequence of the thymidylate synthetase gene (thyP3) from the Bacillus subtilis phage phi 3T.</title>
        <authorList>
            <person name="Kenny E."/>
            <person name="Atkinson T."/>
            <person name="Hartley B.S."/>
        </authorList>
    </citation>
    <scope>NUCLEOTIDE SEQUENCE [GENOMIC DNA]</scope>
</reference>
<organism>
    <name type="scientific">Bacillus phage phi3T</name>
    <name type="common">Bacteriophage phi-3T</name>
    <dbReference type="NCBI Taxonomy" id="10736"/>
    <lineage>
        <taxon>Viruses</taxon>
        <taxon>Duplodnaviria</taxon>
        <taxon>Heunggongvirae</taxon>
        <taxon>Uroviricota</taxon>
        <taxon>Caudoviricetes</taxon>
        <taxon>Spbetavirus</taxon>
    </lineage>
</organism>